<evidence type="ECO:0000255" key="1">
    <source>
        <dbReference type="HAMAP-Rule" id="MF_00187"/>
    </source>
</evidence>
<keyword id="KW-0963">Cytoplasm</keyword>
<keyword id="KW-0501">Molybdenum cofactor biosynthesis</keyword>
<sequence length="265" mass="29416">MNKDVSLGQPIVRYEDGKLFNTTDQYVTEFPLTIMVNGEEFATVICSPTNLEELVIGFLASEGAILKRDELKSVLIDDSKGFAHVELNKDLGDRFQYSTKRMIASCCGKSREFYFQNDAAIAKTSMSKITLTPMQIINMMTRLQSASHIYQETGGLHNAAISDGLTFFVHRQDIGRHNALDKLYGFCIQRHITVRDKVLIFSGRISSEILIKAAKIGVGVILSKSAPTTLAVTLANDLNITAVGFIRNGGFNIYSHPERIIDSEQ</sequence>
<accession>A6QJC0</accession>
<organism>
    <name type="scientific">Staphylococcus aureus (strain Newman)</name>
    <dbReference type="NCBI Taxonomy" id="426430"/>
    <lineage>
        <taxon>Bacteria</taxon>
        <taxon>Bacillati</taxon>
        <taxon>Bacillota</taxon>
        <taxon>Bacilli</taxon>
        <taxon>Bacillales</taxon>
        <taxon>Staphylococcaceae</taxon>
        <taxon>Staphylococcus</taxon>
    </lineage>
</organism>
<feature type="chain" id="PRO_1000071687" description="Sulfur carrier protein FdhD">
    <location>
        <begin position="1"/>
        <end position="265"/>
    </location>
</feature>
<feature type="active site" description="Cysteine persulfide intermediate" evidence="1">
    <location>
        <position position="107"/>
    </location>
</feature>
<gene>
    <name evidence="1" type="primary">fdhD</name>
    <name type="ordered locus">NWMN_2180</name>
</gene>
<comment type="function">
    <text evidence="1">Required for formate dehydrogenase (FDH) activity. Acts as a sulfur carrier protein that transfers sulfur from IscS to the molybdenum cofactor prior to its insertion into FDH.</text>
</comment>
<comment type="subcellular location">
    <subcellularLocation>
        <location evidence="1">Cytoplasm</location>
    </subcellularLocation>
</comment>
<comment type="similarity">
    <text evidence="1">Belongs to the FdhD family.</text>
</comment>
<reference key="1">
    <citation type="journal article" date="2008" name="J. Bacteriol.">
        <title>Genome sequence of Staphylococcus aureus strain Newman and comparative analysis of staphylococcal genomes: polymorphism and evolution of two major pathogenicity islands.</title>
        <authorList>
            <person name="Baba T."/>
            <person name="Bae T."/>
            <person name="Schneewind O."/>
            <person name="Takeuchi F."/>
            <person name="Hiramatsu K."/>
        </authorList>
    </citation>
    <scope>NUCLEOTIDE SEQUENCE [LARGE SCALE GENOMIC DNA]</scope>
    <source>
        <strain>Newman</strain>
    </source>
</reference>
<name>FDHD_STAAE</name>
<dbReference type="EMBL" id="AP009351">
    <property type="protein sequence ID" value="BAF68452.1"/>
    <property type="molecule type" value="Genomic_DNA"/>
</dbReference>
<dbReference type="RefSeq" id="WP_001030825.1">
    <property type="nucleotide sequence ID" value="NZ_JBBIAE010000006.1"/>
</dbReference>
<dbReference type="SMR" id="A6QJC0"/>
<dbReference type="KEGG" id="sae:NWMN_2180"/>
<dbReference type="HOGENOM" id="CLU_056887_4_1_9"/>
<dbReference type="Proteomes" id="UP000006386">
    <property type="component" value="Chromosome"/>
</dbReference>
<dbReference type="GO" id="GO:0005737">
    <property type="term" value="C:cytoplasm"/>
    <property type="evidence" value="ECO:0007669"/>
    <property type="project" value="UniProtKB-SubCell"/>
</dbReference>
<dbReference type="GO" id="GO:0097163">
    <property type="term" value="F:sulfur carrier activity"/>
    <property type="evidence" value="ECO:0007669"/>
    <property type="project" value="UniProtKB-UniRule"/>
</dbReference>
<dbReference type="GO" id="GO:0016783">
    <property type="term" value="F:sulfurtransferase activity"/>
    <property type="evidence" value="ECO:0007669"/>
    <property type="project" value="InterPro"/>
</dbReference>
<dbReference type="GO" id="GO:0006777">
    <property type="term" value="P:Mo-molybdopterin cofactor biosynthetic process"/>
    <property type="evidence" value="ECO:0007669"/>
    <property type="project" value="UniProtKB-UniRule"/>
</dbReference>
<dbReference type="Gene3D" id="3.10.20.10">
    <property type="match status" value="1"/>
</dbReference>
<dbReference type="Gene3D" id="3.40.140.10">
    <property type="entry name" value="Cytidine Deaminase, domain 2"/>
    <property type="match status" value="1"/>
</dbReference>
<dbReference type="HAMAP" id="MF_00187">
    <property type="entry name" value="FdhD"/>
    <property type="match status" value="1"/>
</dbReference>
<dbReference type="InterPro" id="IPR016193">
    <property type="entry name" value="Cytidine_deaminase-like"/>
</dbReference>
<dbReference type="InterPro" id="IPR003786">
    <property type="entry name" value="FdhD"/>
</dbReference>
<dbReference type="NCBIfam" id="TIGR00129">
    <property type="entry name" value="fdhD_narQ"/>
    <property type="match status" value="1"/>
</dbReference>
<dbReference type="PANTHER" id="PTHR30592">
    <property type="entry name" value="FORMATE DEHYDROGENASE"/>
    <property type="match status" value="1"/>
</dbReference>
<dbReference type="PANTHER" id="PTHR30592:SF1">
    <property type="entry name" value="SULFUR CARRIER PROTEIN FDHD"/>
    <property type="match status" value="1"/>
</dbReference>
<dbReference type="Pfam" id="PF02634">
    <property type="entry name" value="FdhD-NarQ"/>
    <property type="match status" value="1"/>
</dbReference>
<dbReference type="PIRSF" id="PIRSF015626">
    <property type="entry name" value="FdhD"/>
    <property type="match status" value="1"/>
</dbReference>
<dbReference type="SUPFAM" id="SSF53927">
    <property type="entry name" value="Cytidine deaminase-like"/>
    <property type="match status" value="1"/>
</dbReference>
<protein>
    <recommendedName>
        <fullName evidence="1">Sulfur carrier protein FdhD</fullName>
    </recommendedName>
</protein>
<proteinExistence type="inferred from homology"/>